<keyword id="KW-0030">Aminoacyl-tRNA synthetase</keyword>
<keyword id="KW-0067">ATP-binding</keyword>
<keyword id="KW-0963">Cytoplasm</keyword>
<keyword id="KW-0436">Ligase</keyword>
<keyword id="KW-0547">Nucleotide-binding</keyword>
<keyword id="KW-0648">Protein biosynthesis</keyword>
<keyword id="KW-1185">Reference proteome</keyword>
<gene>
    <name evidence="1" type="primary">proS</name>
    <name type="ordered locus">CHAB381_0897</name>
</gene>
<name>SYP_CAMHC</name>
<feature type="chain" id="PRO_1000069130" description="Proline--tRNA ligase">
    <location>
        <begin position="1"/>
        <end position="569"/>
    </location>
</feature>
<reference key="1">
    <citation type="submission" date="2007-07" db="EMBL/GenBank/DDBJ databases">
        <title>Complete genome sequence of Campylobacter hominis ATCC BAA-381, a commensal isolated from the human gastrointestinal tract.</title>
        <authorList>
            <person name="Fouts D.E."/>
            <person name="Mongodin E.F."/>
            <person name="Puiu D."/>
            <person name="Sebastian Y."/>
            <person name="Miller W.G."/>
            <person name="Mandrell R.E."/>
            <person name="Nelson K.E."/>
        </authorList>
    </citation>
    <scope>NUCLEOTIDE SEQUENCE [LARGE SCALE GENOMIC DNA]</scope>
    <source>
        <strain>ATCC BAA-381 / DSM 21671 / CCUG 45161 / LMG 19568 / NCTC 13146 / CH001A</strain>
    </source>
</reference>
<dbReference type="EC" id="6.1.1.15" evidence="1"/>
<dbReference type="EMBL" id="CP000776">
    <property type="protein sequence ID" value="ABS51439.1"/>
    <property type="molecule type" value="Genomic_DNA"/>
</dbReference>
<dbReference type="RefSeq" id="WP_012108750.1">
    <property type="nucleotide sequence ID" value="NC_009714.1"/>
</dbReference>
<dbReference type="SMR" id="A7I1R8"/>
<dbReference type="STRING" id="360107.CHAB381_0897"/>
<dbReference type="KEGG" id="cha:CHAB381_0897"/>
<dbReference type="eggNOG" id="COG0442">
    <property type="taxonomic scope" value="Bacteria"/>
</dbReference>
<dbReference type="HOGENOM" id="CLU_016739_0_0_7"/>
<dbReference type="OrthoDB" id="9809052at2"/>
<dbReference type="Proteomes" id="UP000002407">
    <property type="component" value="Chromosome"/>
</dbReference>
<dbReference type="GO" id="GO:0005829">
    <property type="term" value="C:cytosol"/>
    <property type="evidence" value="ECO:0007669"/>
    <property type="project" value="TreeGrafter"/>
</dbReference>
<dbReference type="GO" id="GO:0002161">
    <property type="term" value="F:aminoacyl-tRNA deacylase activity"/>
    <property type="evidence" value="ECO:0007669"/>
    <property type="project" value="InterPro"/>
</dbReference>
<dbReference type="GO" id="GO:0005524">
    <property type="term" value="F:ATP binding"/>
    <property type="evidence" value="ECO:0007669"/>
    <property type="project" value="UniProtKB-UniRule"/>
</dbReference>
<dbReference type="GO" id="GO:0004827">
    <property type="term" value="F:proline-tRNA ligase activity"/>
    <property type="evidence" value="ECO:0007669"/>
    <property type="project" value="UniProtKB-UniRule"/>
</dbReference>
<dbReference type="GO" id="GO:0006433">
    <property type="term" value="P:prolyl-tRNA aminoacylation"/>
    <property type="evidence" value="ECO:0007669"/>
    <property type="project" value="UniProtKB-UniRule"/>
</dbReference>
<dbReference type="CDD" id="cd04334">
    <property type="entry name" value="ProRS-INS"/>
    <property type="match status" value="1"/>
</dbReference>
<dbReference type="CDD" id="cd00861">
    <property type="entry name" value="ProRS_anticodon_short"/>
    <property type="match status" value="1"/>
</dbReference>
<dbReference type="CDD" id="cd00779">
    <property type="entry name" value="ProRS_core_prok"/>
    <property type="match status" value="1"/>
</dbReference>
<dbReference type="FunFam" id="3.30.930.10:FF:000065">
    <property type="entry name" value="Proline--tRNA ligase"/>
    <property type="match status" value="1"/>
</dbReference>
<dbReference type="FunFam" id="3.30.930.10:FF:000066">
    <property type="entry name" value="Proline--tRNA ligase"/>
    <property type="match status" value="1"/>
</dbReference>
<dbReference type="Gene3D" id="3.40.50.800">
    <property type="entry name" value="Anticodon-binding domain"/>
    <property type="match status" value="1"/>
</dbReference>
<dbReference type="Gene3D" id="3.30.930.10">
    <property type="entry name" value="Bira Bifunctional Protein, Domain 2"/>
    <property type="match status" value="2"/>
</dbReference>
<dbReference type="HAMAP" id="MF_01569">
    <property type="entry name" value="Pro_tRNA_synth_type1"/>
    <property type="match status" value="1"/>
</dbReference>
<dbReference type="InterPro" id="IPR002314">
    <property type="entry name" value="aa-tRNA-synt_IIb"/>
</dbReference>
<dbReference type="InterPro" id="IPR006195">
    <property type="entry name" value="aa-tRNA-synth_II"/>
</dbReference>
<dbReference type="InterPro" id="IPR045864">
    <property type="entry name" value="aa-tRNA-synth_II/BPL/LPL"/>
</dbReference>
<dbReference type="InterPro" id="IPR004154">
    <property type="entry name" value="Anticodon-bd"/>
</dbReference>
<dbReference type="InterPro" id="IPR036621">
    <property type="entry name" value="Anticodon-bd_dom_sf"/>
</dbReference>
<dbReference type="InterPro" id="IPR002316">
    <property type="entry name" value="Pro-tRNA-ligase_IIa"/>
</dbReference>
<dbReference type="InterPro" id="IPR004500">
    <property type="entry name" value="Pro-tRNA-synth_IIa_bac-type"/>
</dbReference>
<dbReference type="InterPro" id="IPR023717">
    <property type="entry name" value="Pro-tRNA-Synthase_IIa_type1"/>
</dbReference>
<dbReference type="InterPro" id="IPR050062">
    <property type="entry name" value="Pro-tRNA_synthetase"/>
</dbReference>
<dbReference type="InterPro" id="IPR044140">
    <property type="entry name" value="ProRS_anticodon_short"/>
</dbReference>
<dbReference type="InterPro" id="IPR033730">
    <property type="entry name" value="ProRS_core_prok"/>
</dbReference>
<dbReference type="InterPro" id="IPR036754">
    <property type="entry name" value="YbaK/aa-tRNA-synt-asso_dom_sf"/>
</dbReference>
<dbReference type="InterPro" id="IPR007214">
    <property type="entry name" value="YbaK/aa-tRNA-synth-assoc-dom"/>
</dbReference>
<dbReference type="NCBIfam" id="NF006625">
    <property type="entry name" value="PRK09194.1"/>
    <property type="match status" value="1"/>
</dbReference>
<dbReference type="NCBIfam" id="TIGR00409">
    <property type="entry name" value="proS_fam_II"/>
    <property type="match status" value="1"/>
</dbReference>
<dbReference type="PANTHER" id="PTHR42753">
    <property type="entry name" value="MITOCHONDRIAL RIBOSOME PROTEIN L39/PROLYL-TRNA LIGASE FAMILY MEMBER"/>
    <property type="match status" value="1"/>
</dbReference>
<dbReference type="PANTHER" id="PTHR42753:SF2">
    <property type="entry name" value="PROLINE--TRNA LIGASE"/>
    <property type="match status" value="1"/>
</dbReference>
<dbReference type="Pfam" id="PF03129">
    <property type="entry name" value="HGTP_anticodon"/>
    <property type="match status" value="1"/>
</dbReference>
<dbReference type="Pfam" id="PF00587">
    <property type="entry name" value="tRNA-synt_2b"/>
    <property type="match status" value="1"/>
</dbReference>
<dbReference type="Pfam" id="PF04073">
    <property type="entry name" value="tRNA_edit"/>
    <property type="match status" value="1"/>
</dbReference>
<dbReference type="PRINTS" id="PR01046">
    <property type="entry name" value="TRNASYNTHPRO"/>
</dbReference>
<dbReference type="SUPFAM" id="SSF52954">
    <property type="entry name" value="Class II aaRS ABD-related"/>
    <property type="match status" value="1"/>
</dbReference>
<dbReference type="SUPFAM" id="SSF55681">
    <property type="entry name" value="Class II aaRS and biotin synthetases"/>
    <property type="match status" value="1"/>
</dbReference>
<dbReference type="SUPFAM" id="SSF55826">
    <property type="entry name" value="YbaK/ProRS associated domain"/>
    <property type="match status" value="1"/>
</dbReference>
<dbReference type="PROSITE" id="PS50862">
    <property type="entry name" value="AA_TRNA_LIGASE_II"/>
    <property type="match status" value="1"/>
</dbReference>
<accession>A7I1R8</accession>
<proteinExistence type="inferred from homology"/>
<sequence length="569" mass="63748">MKFSKFFAPTLKEAPKDAILPSHVFLIRAGFIEQLGSGLYNFLPLGEMVIEKIKAVIKDEMDKTGALQVNFSFVTPSEFWQESGRYNVYGKELLRIKDRKENGFVLSPTNEESSVKMIANKITSYKQLPIHIYQINTKFRDEARPRFGLLRGREFIMKDGYSFHANMEDLKREFDVMEKTYTNIFSRLGLNFRAVEADSGAIGGSGSKEFMVLAQNGEDDILVCESCKYAANIEAAVRVKREAPCAAPETEKMQKFHTPNMKTIDDVANFFKVDKFFTVKAVIKKAVFVDKSEIVLFFVRGDDELQETKALNACGALEFEDASEDEIKKAGLIAGFCGPAGLPDDINFYIDKELKNERNLIVGANEKDYHIVGFAVTNFKDERFVDLSQVRAGDCCPKCGAKLDIKKGIEVGHIFQLGQKYSKAMNAIFLDENGKAVPFFMGCYGIGVSRLLAVMIEAGHDEKGCIWNTQTAPFKLEIIISNSKDEDASNFAIQLYEKCKNAGISTLLDDRKERFGVKMNDFELIGFPFAVLVGKGLKDGNVELIERKGLNKKIVSSGEIFETLKGILC</sequence>
<comment type="function">
    <text evidence="1">Catalyzes the attachment of proline to tRNA(Pro) in a two-step reaction: proline is first activated by ATP to form Pro-AMP and then transferred to the acceptor end of tRNA(Pro). As ProRS can inadvertently accommodate and process non-cognate amino acids such as alanine and cysteine, to avoid such errors it has two additional distinct editing activities against alanine. One activity is designated as 'pretransfer' editing and involves the tRNA(Pro)-independent hydrolysis of activated Ala-AMP. The other activity is designated 'posttransfer' editing and involves deacylation of mischarged Ala-tRNA(Pro). The misacylated Cys-tRNA(Pro) is not edited by ProRS.</text>
</comment>
<comment type="catalytic activity">
    <reaction evidence="1">
        <text>tRNA(Pro) + L-proline + ATP = L-prolyl-tRNA(Pro) + AMP + diphosphate</text>
        <dbReference type="Rhea" id="RHEA:14305"/>
        <dbReference type="Rhea" id="RHEA-COMP:9700"/>
        <dbReference type="Rhea" id="RHEA-COMP:9702"/>
        <dbReference type="ChEBI" id="CHEBI:30616"/>
        <dbReference type="ChEBI" id="CHEBI:33019"/>
        <dbReference type="ChEBI" id="CHEBI:60039"/>
        <dbReference type="ChEBI" id="CHEBI:78442"/>
        <dbReference type="ChEBI" id="CHEBI:78532"/>
        <dbReference type="ChEBI" id="CHEBI:456215"/>
        <dbReference type="EC" id="6.1.1.15"/>
    </reaction>
</comment>
<comment type="subunit">
    <text evidence="1">Homodimer.</text>
</comment>
<comment type="subcellular location">
    <subcellularLocation>
        <location evidence="1">Cytoplasm</location>
    </subcellularLocation>
</comment>
<comment type="domain">
    <text evidence="1">Consists of three domains: the N-terminal catalytic domain, the editing domain and the C-terminal anticodon-binding domain.</text>
</comment>
<comment type="similarity">
    <text evidence="1">Belongs to the class-II aminoacyl-tRNA synthetase family. ProS type 1 subfamily.</text>
</comment>
<evidence type="ECO:0000255" key="1">
    <source>
        <dbReference type="HAMAP-Rule" id="MF_01569"/>
    </source>
</evidence>
<protein>
    <recommendedName>
        <fullName evidence="1">Proline--tRNA ligase</fullName>
        <ecNumber evidence="1">6.1.1.15</ecNumber>
    </recommendedName>
    <alternativeName>
        <fullName evidence="1">Prolyl-tRNA synthetase</fullName>
        <shortName evidence="1">ProRS</shortName>
    </alternativeName>
</protein>
<organism>
    <name type="scientific">Campylobacter hominis (strain ATCC BAA-381 / DSM 21671 / CCUG 45161 / LMG 19568 / NCTC 13146 / CH001A)</name>
    <dbReference type="NCBI Taxonomy" id="360107"/>
    <lineage>
        <taxon>Bacteria</taxon>
        <taxon>Pseudomonadati</taxon>
        <taxon>Campylobacterota</taxon>
        <taxon>Epsilonproteobacteria</taxon>
        <taxon>Campylobacterales</taxon>
        <taxon>Campylobacteraceae</taxon>
        <taxon>Campylobacter</taxon>
    </lineage>
</organism>